<proteinExistence type="inferred from homology"/>
<name>FRSA_ECOK1</name>
<organism>
    <name type="scientific">Escherichia coli O1:K1 / APEC</name>
    <dbReference type="NCBI Taxonomy" id="405955"/>
    <lineage>
        <taxon>Bacteria</taxon>
        <taxon>Pseudomonadati</taxon>
        <taxon>Pseudomonadota</taxon>
        <taxon>Gammaproteobacteria</taxon>
        <taxon>Enterobacterales</taxon>
        <taxon>Enterobacteriaceae</taxon>
        <taxon>Escherichia</taxon>
    </lineage>
</organism>
<dbReference type="EC" id="3.1.1.1" evidence="1"/>
<dbReference type="EMBL" id="CP000468">
    <property type="protein sequence ID" value="ABI99739.1"/>
    <property type="molecule type" value="Genomic_DNA"/>
</dbReference>
<dbReference type="RefSeq" id="WP_000189577.1">
    <property type="nucleotide sequence ID" value="NZ_CADILS010000061.1"/>
</dbReference>
<dbReference type="SMR" id="A1A7V0"/>
<dbReference type="ESTHER" id="ecoli-yafa">
    <property type="family name" value="Duf_1100-R"/>
</dbReference>
<dbReference type="KEGG" id="ecv:APECO1_1730"/>
<dbReference type="HOGENOM" id="CLU_036819_0_0_6"/>
<dbReference type="Proteomes" id="UP000008216">
    <property type="component" value="Chromosome"/>
</dbReference>
<dbReference type="GO" id="GO:0106435">
    <property type="term" value="F:carboxylesterase activity"/>
    <property type="evidence" value="ECO:0007669"/>
    <property type="project" value="UniProtKB-EC"/>
</dbReference>
<dbReference type="FunFam" id="3.40.50.1820:FF:000022">
    <property type="entry name" value="Esterase FrsA"/>
    <property type="match status" value="1"/>
</dbReference>
<dbReference type="Gene3D" id="3.40.50.1820">
    <property type="entry name" value="alpha/beta hydrolase"/>
    <property type="match status" value="1"/>
</dbReference>
<dbReference type="HAMAP" id="MF_01063">
    <property type="entry name" value="FrsA"/>
    <property type="match status" value="1"/>
</dbReference>
<dbReference type="InterPro" id="IPR029058">
    <property type="entry name" value="AB_hydrolase_fold"/>
</dbReference>
<dbReference type="InterPro" id="IPR043423">
    <property type="entry name" value="FrsA"/>
</dbReference>
<dbReference type="InterPro" id="IPR010520">
    <property type="entry name" value="FrsA-like"/>
</dbReference>
<dbReference type="InterPro" id="IPR050261">
    <property type="entry name" value="FrsA_esterase"/>
</dbReference>
<dbReference type="NCBIfam" id="NF003460">
    <property type="entry name" value="PRK05077.1"/>
    <property type="match status" value="1"/>
</dbReference>
<dbReference type="PANTHER" id="PTHR22946">
    <property type="entry name" value="DIENELACTONE HYDROLASE DOMAIN-CONTAINING PROTEIN-RELATED"/>
    <property type="match status" value="1"/>
</dbReference>
<dbReference type="PANTHER" id="PTHR22946:SF4">
    <property type="entry name" value="ESTERASE FRSA"/>
    <property type="match status" value="1"/>
</dbReference>
<dbReference type="Pfam" id="PF06500">
    <property type="entry name" value="FrsA-like"/>
    <property type="match status" value="1"/>
</dbReference>
<dbReference type="SUPFAM" id="SSF53474">
    <property type="entry name" value="alpha/beta-Hydrolases"/>
    <property type="match status" value="1"/>
</dbReference>
<feature type="chain" id="PRO_1000064479" description="Esterase FrsA">
    <location>
        <begin position="1"/>
        <end position="414"/>
    </location>
</feature>
<sequence>MTQANLSETLFKPRFKHPETSTLVRRFSHGAQPPVQSALDGKTIPHWYRMINRLMWIWRGIDPREILDVQARIVMSDAERTDDDLYDTVIGYRGGNWIYEWATQAMVWQQKACAEEDPQLSGRHWLHAATLYNIAAYPHLKGDDLAEQAQALSNRAYEEAAQRLPGTMRQMEFTVPGGAPITGFLHMPKGDGPFPTVLMCGGLDAMQTDYYSLYERYFAPRGIAMLTIDMPSVGFSSKWKLTQDSSLLHQHVLKALPNVPWVDHTRVAAFGFRFGANVAVRLAYLESPRLKAVACLGPVVHTLLSDFKCQQQVPEMYLDVLASRLGMHDASDEALRVELNRYSLKVQGLLGRRCPTPMLSGYWKNDPFSPEEDSRLITSSSADGKLLEIPFNPVYRNFDKGLQEITDWIEKRLC</sequence>
<comment type="function">
    <text evidence="1">Catalyzes the hydrolysis of esters.</text>
</comment>
<comment type="catalytic activity">
    <reaction evidence="1">
        <text>a carboxylic ester + H2O = an alcohol + a carboxylate + H(+)</text>
        <dbReference type="Rhea" id="RHEA:21164"/>
        <dbReference type="ChEBI" id="CHEBI:15377"/>
        <dbReference type="ChEBI" id="CHEBI:15378"/>
        <dbReference type="ChEBI" id="CHEBI:29067"/>
        <dbReference type="ChEBI" id="CHEBI:30879"/>
        <dbReference type="ChEBI" id="CHEBI:33308"/>
        <dbReference type="EC" id="3.1.1.1"/>
    </reaction>
</comment>
<comment type="similarity">
    <text evidence="1">Belongs to the FrsA family.</text>
</comment>
<accession>A1A7V0</accession>
<protein>
    <recommendedName>
        <fullName evidence="1">Esterase FrsA</fullName>
        <ecNumber evidence="1">3.1.1.1</ecNumber>
    </recommendedName>
</protein>
<keyword id="KW-0378">Hydrolase</keyword>
<keyword id="KW-1185">Reference proteome</keyword>
<keyword id="KW-0719">Serine esterase</keyword>
<gene>
    <name evidence="1" type="primary">frsA</name>
    <name type="ordered locus">Ecok1_02460</name>
    <name type="ORF">APECO1_1730</name>
</gene>
<evidence type="ECO:0000255" key="1">
    <source>
        <dbReference type="HAMAP-Rule" id="MF_01063"/>
    </source>
</evidence>
<reference key="1">
    <citation type="journal article" date="2007" name="J. Bacteriol.">
        <title>The genome sequence of avian pathogenic Escherichia coli strain O1:K1:H7 shares strong similarities with human extraintestinal pathogenic E. coli genomes.</title>
        <authorList>
            <person name="Johnson T.J."/>
            <person name="Kariyawasam S."/>
            <person name="Wannemuehler Y."/>
            <person name="Mangiamele P."/>
            <person name="Johnson S.J."/>
            <person name="Doetkott C."/>
            <person name="Skyberg J.A."/>
            <person name="Lynne A.M."/>
            <person name="Johnson J.R."/>
            <person name="Nolan L.K."/>
        </authorList>
    </citation>
    <scope>NUCLEOTIDE SEQUENCE [LARGE SCALE GENOMIC DNA]</scope>
</reference>